<sequence>MSVQTTYSPVNQDEQVHDGLASRHVSCEGAPSDDSPYALSSLDHNPLGINVSFLLCFHAAQPEEGIRVLEDGINQLLKAHPFLAGDVTRPTRLSQRTNTMQIEPDAPESLLKIPMLQIRHHPATSIEELESKRLLPGAEEQEIIRQLAPLPIDMDLSLPQRPVLRFQANIMRDGVILAMTFHHAAMDGAGAARVLGLLADYCRDPAAPSVGVIPDRQLRSQIDRLATGCSPSASRADFSQHYCGLGDWAALLAENWPGFLQARATELVTWRLTIPGFKVQYLKGACNALLQGQTSALAGGTLTPTILSNNDIVSALMAMILRQAGQLAGKSTELSIAVDMRPSFHAPAFNNYLGNMVLLTYTPIPAAKDQAPVDGPRPPTELRQEDLEELTGIAARIRQSLLKVDAEYIQGVLSHLHSQTDWANIGFRGVPIPLSSFRNFEMIGLDFGETLGSQPRGFQLHLPVLGGMCFVLPKRQDRTEPWDLHLTLHRDDVSRIANDPLFRWAAGEHF</sequence>
<protein>
    <recommendedName>
        <fullName evidence="5">O-acetyltransferase pyr7</fullName>
        <ecNumber evidence="7">2.3.1.-</ecNumber>
    </recommendedName>
    <alternativeName>
        <fullName evidence="5">Pyripyropene synthesis protein 7</fullName>
    </alternativeName>
</protein>
<keyword id="KW-0012">Acyltransferase</keyword>
<keyword id="KW-1185">Reference proteome</keyword>
<keyword id="KW-0808">Transferase</keyword>
<feature type="chain" id="PRO_0000436760" description="O-acetyltransferase pyr7">
    <location>
        <begin position="1"/>
        <end position="510"/>
    </location>
</feature>
<evidence type="ECO:0000269" key="1">
    <source>
    </source>
</evidence>
<evidence type="ECO:0000269" key="2">
    <source>
    </source>
</evidence>
<evidence type="ECO:0000269" key="3">
    <source>
    </source>
</evidence>
<evidence type="ECO:0000269" key="4">
    <source>
    </source>
</evidence>
<evidence type="ECO:0000303" key="5">
    <source>
    </source>
</evidence>
<evidence type="ECO:0000305" key="6"/>
<evidence type="ECO:0000305" key="7">
    <source>
    </source>
</evidence>
<evidence type="ECO:0000305" key="8">
    <source>
    </source>
</evidence>
<evidence type="ECO:0000305" key="9">
    <source>
    </source>
</evidence>
<dbReference type="EC" id="2.3.1.-" evidence="7"/>
<dbReference type="EMBL" id="AAHF01000006">
    <property type="protein sequence ID" value="EAL89235.1"/>
    <property type="molecule type" value="Genomic_DNA"/>
</dbReference>
<dbReference type="RefSeq" id="XP_751273.1">
    <property type="nucleotide sequence ID" value="XM_746180.1"/>
</dbReference>
<dbReference type="SMR" id="Q4WLC9"/>
<dbReference type="FunCoup" id="Q4WLC9">
    <property type="interactions" value="68"/>
</dbReference>
<dbReference type="STRING" id="330879.Q4WLC9"/>
<dbReference type="EnsemblFungi" id="EAL89235">
    <property type="protein sequence ID" value="EAL89235"/>
    <property type="gene ID" value="AFUA_6G13990"/>
</dbReference>
<dbReference type="GeneID" id="3508589"/>
<dbReference type="KEGG" id="afm:AFUA_6G13990"/>
<dbReference type="VEuPathDB" id="FungiDB:Afu6g13990"/>
<dbReference type="eggNOG" id="ENOG502RP4M">
    <property type="taxonomic scope" value="Eukaryota"/>
</dbReference>
<dbReference type="HOGENOM" id="CLU_026450_1_1_1"/>
<dbReference type="InParanoid" id="Q4WLC9"/>
<dbReference type="OMA" id="QMNIKGG"/>
<dbReference type="OrthoDB" id="1862401at2759"/>
<dbReference type="UniPathway" id="UPA00213"/>
<dbReference type="Proteomes" id="UP000002530">
    <property type="component" value="Chromosome 6"/>
</dbReference>
<dbReference type="GO" id="GO:0016747">
    <property type="term" value="F:acyltransferase activity, transferring groups other than amino-acyl groups"/>
    <property type="evidence" value="ECO:0000318"/>
    <property type="project" value="GO_Central"/>
</dbReference>
<dbReference type="GO" id="GO:0016114">
    <property type="term" value="P:terpenoid biosynthetic process"/>
    <property type="evidence" value="ECO:0007669"/>
    <property type="project" value="UniProtKB-UniPathway"/>
</dbReference>
<dbReference type="Gene3D" id="3.30.559.10">
    <property type="entry name" value="Chloramphenicol acetyltransferase-like domain"/>
    <property type="match status" value="2"/>
</dbReference>
<dbReference type="InterPro" id="IPR023213">
    <property type="entry name" value="CAT-like_dom_sf"/>
</dbReference>
<dbReference type="InterPro" id="IPR050317">
    <property type="entry name" value="Plant_Fungal_Acyltransferase"/>
</dbReference>
<dbReference type="InterPro" id="IPR054710">
    <property type="entry name" value="Tri101-like_N"/>
</dbReference>
<dbReference type="PANTHER" id="PTHR31642:SF270">
    <property type="entry name" value="O-ACYLTRANSFERASE AUSQ"/>
    <property type="match status" value="1"/>
</dbReference>
<dbReference type="PANTHER" id="PTHR31642">
    <property type="entry name" value="TRICHOTHECENE 3-O-ACETYLTRANSFERASE"/>
    <property type="match status" value="1"/>
</dbReference>
<dbReference type="Pfam" id="PF22664">
    <property type="entry name" value="TRI-like_N"/>
    <property type="match status" value="1"/>
</dbReference>
<dbReference type="SUPFAM" id="SSF52777">
    <property type="entry name" value="CoA-dependent acyltransferases"/>
    <property type="match status" value="1"/>
</dbReference>
<comment type="function">
    <text evidence="3 8 9">O-acetyltransferase; part of the gene cluster that mediates the biosynthesis of pyripyropene A, a specific human acyl-coenzyme A:cholesterol acyltransferase 2 inhibitor (PubMed:20861902). The first step of the pathway is the synthesis of nicotinyl-CoA from nicotinic acid by the nicotinic acid-CoA ligase pyr1 (PubMed:20861902). Nicotinyl-CoA is then a substrate of polyketide synthase pyr2 to produce 4-hydroxy-6-(3-pyridinyl)-2H-pyran-2-one (HPPO) which is further prenylated by the polyprenyl transferase pyr6 to yield farnesyl-HPPO (PubMed:20861902). The next steps consist of an epoxidation of farnesyl-HPPO to epoxyfarnesyl-HPPO by FAD-dependent monooxygenase pyr5 and a cyclization of the terpenoid portion by the terpene cyclase pyr4 to yield deacetyl-pyripyropene E (PubMed:20861902). The 2 cytochrome P450 monooxygenases pyr3 and pyr9, and the 2 acetyltransferases pyr7 and pyr8 are involved in the conversion of deacetyl-pyripyropene E into pyripyropene A through several cycles of oxidation and acetylation steps (PubMed:20861902). Pyr7 acetylates deacetyl-pyripyropene E to pyripyropene E which is oxidized to 11-deacetyl-pyripyropene O by pyr3, which is in turn acetylated into pyripyropene O by pyr8 (PubMed:21224862, PubMed:26019565). Pyripyropene O is then oxidized to deacetyl-pyripyropene A by pyr9 (PubMed:21224862). Deacetyl-pyripyropene A is finally acetylated to pyripyropene A by pyr8 (PubMed:26019565).</text>
</comment>
<comment type="pathway">
    <text evidence="3">Secondary metabolite biosynthesis; terpenoid biosynthesis.</text>
</comment>
<comment type="biotechnology">
    <text evidence="1 2 4">Pyripyropene A and its derivatives have very unique characteristics of selectively inhibiting the acyl-coenzyme A:cholesterol acyltransferase 2 (ACAT2) isozyme (PubMed:18997389). Therefore, pyripyropenes are expected to be developed as a new type of anti-atherosclerotic agent (PubMed:18997389). Furthermore, pyripyropenes have been shown to exhibit anti-angiogenic activity against human umbilical vein endothelial cells (PubMed:19571395). Finally, pyripyropene A also exhibits insecticidal properties (PubMed:8534106).</text>
</comment>
<comment type="similarity">
    <text evidence="6">Belongs to the fumigaclavine B O-acetyltransferase family.</text>
</comment>
<name>PYR7_ASPFU</name>
<accession>Q4WLC9</accession>
<organism>
    <name type="scientific">Aspergillus fumigatus (strain ATCC MYA-4609 / CBS 101355 / FGSC A1100 / Af293)</name>
    <name type="common">Neosartorya fumigata</name>
    <dbReference type="NCBI Taxonomy" id="330879"/>
    <lineage>
        <taxon>Eukaryota</taxon>
        <taxon>Fungi</taxon>
        <taxon>Dikarya</taxon>
        <taxon>Ascomycota</taxon>
        <taxon>Pezizomycotina</taxon>
        <taxon>Eurotiomycetes</taxon>
        <taxon>Eurotiomycetidae</taxon>
        <taxon>Eurotiales</taxon>
        <taxon>Aspergillaceae</taxon>
        <taxon>Aspergillus</taxon>
        <taxon>Aspergillus subgen. Fumigati</taxon>
    </lineage>
</organism>
<reference key="1">
    <citation type="journal article" date="2005" name="Nature">
        <title>Genomic sequence of the pathogenic and allergenic filamentous fungus Aspergillus fumigatus.</title>
        <authorList>
            <person name="Nierman W.C."/>
            <person name="Pain A."/>
            <person name="Anderson M.J."/>
            <person name="Wortman J.R."/>
            <person name="Kim H.S."/>
            <person name="Arroyo J."/>
            <person name="Berriman M."/>
            <person name="Abe K."/>
            <person name="Archer D.B."/>
            <person name="Bermejo C."/>
            <person name="Bennett J.W."/>
            <person name="Bowyer P."/>
            <person name="Chen D."/>
            <person name="Collins M."/>
            <person name="Coulsen R."/>
            <person name="Davies R."/>
            <person name="Dyer P.S."/>
            <person name="Farman M.L."/>
            <person name="Fedorova N."/>
            <person name="Fedorova N.D."/>
            <person name="Feldblyum T.V."/>
            <person name="Fischer R."/>
            <person name="Fosker N."/>
            <person name="Fraser A."/>
            <person name="Garcia J.L."/>
            <person name="Garcia M.J."/>
            <person name="Goble A."/>
            <person name="Goldman G.H."/>
            <person name="Gomi K."/>
            <person name="Griffith-Jones S."/>
            <person name="Gwilliam R."/>
            <person name="Haas B.J."/>
            <person name="Haas H."/>
            <person name="Harris D.E."/>
            <person name="Horiuchi H."/>
            <person name="Huang J."/>
            <person name="Humphray S."/>
            <person name="Jimenez J."/>
            <person name="Keller N."/>
            <person name="Khouri H."/>
            <person name="Kitamoto K."/>
            <person name="Kobayashi T."/>
            <person name="Konzack S."/>
            <person name="Kulkarni R."/>
            <person name="Kumagai T."/>
            <person name="Lafton A."/>
            <person name="Latge J.-P."/>
            <person name="Li W."/>
            <person name="Lord A."/>
            <person name="Lu C."/>
            <person name="Majoros W.H."/>
            <person name="May G.S."/>
            <person name="Miller B.L."/>
            <person name="Mohamoud Y."/>
            <person name="Molina M."/>
            <person name="Monod M."/>
            <person name="Mouyna I."/>
            <person name="Mulligan S."/>
            <person name="Murphy L.D."/>
            <person name="O'Neil S."/>
            <person name="Paulsen I."/>
            <person name="Penalva M.A."/>
            <person name="Pertea M."/>
            <person name="Price C."/>
            <person name="Pritchard B.L."/>
            <person name="Quail M.A."/>
            <person name="Rabbinowitsch E."/>
            <person name="Rawlins N."/>
            <person name="Rajandream M.A."/>
            <person name="Reichard U."/>
            <person name="Renauld H."/>
            <person name="Robson G.D."/>
            <person name="Rodriguez de Cordoba S."/>
            <person name="Rodriguez-Pena J.M."/>
            <person name="Ronning C.M."/>
            <person name="Rutter S."/>
            <person name="Salzberg S.L."/>
            <person name="Sanchez M."/>
            <person name="Sanchez-Ferrero J.C."/>
            <person name="Saunders D."/>
            <person name="Seeger K."/>
            <person name="Squares R."/>
            <person name="Squares S."/>
            <person name="Takeuchi M."/>
            <person name="Tekaia F."/>
            <person name="Turner G."/>
            <person name="Vazquez de Aldana C.R."/>
            <person name="Weidman J."/>
            <person name="White O."/>
            <person name="Woodward J.R."/>
            <person name="Yu J.-H."/>
            <person name="Fraser C.M."/>
            <person name="Galagan J.E."/>
            <person name="Asai K."/>
            <person name="Machida M."/>
            <person name="Hall N."/>
            <person name="Barrell B.G."/>
            <person name="Denning D.W."/>
        </authorList>
    </citation>
    <scope>NUCLEOTIDE SEQUENCE [LARGE SCALE GENOMIC DNA]</scope>
    <source>
        <strain>ATCC MYA-4609 / CBS 101355 / FGSC A1100 / Af293</strain>
    </source>
</reference>
<reference key="2">
    <citation type="journal article" date="1995" name="Appl. Environ. Microbiol.">
        <title>Aflavinines and other antiinsectan metabolites from the ascostromata of Eupenicillium crustaceum and related species.</title>
        <authorList>
            <person name="Wang H.J."/>
            <person name="Gloer J.B."/>
            <person name="Wicklow D.T."/>
            <person name="Dowd P.F."/>
        </authorList>
    </citation>
    <scope>BIOTECHNOLOGY</scope>
</reference>
<reference key="3">
    <citation type="journal article" date="2008" name="J. Antibiot.">
        <title>Selectivity of pyripyropene derivatives in inhibition toward acyl-CoA:cholesterol acyltransferase 2 isozyme.</title>
        <authorList>
            <person name="Ohshiro T."/>
            <person name="Ohte S."/>
            <person name="Matsuda D."/>
            <person name="Ohtawa M."/>
            <person name="Nagamitsu T."/>
            <person name="Sunazuka T."/>
            <person name="Harigaya Y."/>
            <person name="Rudel L.L."/>
            <person name="Omura S."/>
            <person name="Tomoda H."/>
        </authorList>
    </citation>
    <scope>BIOTECHNOLOGY</scope>
</reference>
<reference key="4">
    <citation type="journal article" date="2009" name="Biol. Pharm. Bull.">
        <title>Pyripyropenes, fungal sesquiterpenes conjugated with alpha-pyrone and pyridine moieties, exhibits anti-angiogenic activity against human umbilical vein endothelial cells.</title>
        <authorList>
            <person name="Hayashi A."/>
            <person name="Arai M."/>
            <person name="Fujita M."/>
            <person name="Kobayashi M."/>
        </authorList>
    </citation>
    <scope>BIOTECHNOLOGY</scope>
</reference>
<reference key="5">
    <citation type="journal article" date="2010" name="Nat. Chem.">
        <title>Reconstitution of a fungal meroterpenoid biosynthesis reveals the involvement of a novel family of terpene cyclases.</title>
        <authorList>
            <person name="Itoh T."/>
            <person name="Tokunaga K."/>
            <person name="Matsuda Y."/>
            <person name="Fujii I."/>
            <person name="Abe I."/>
            <person name="Ebizuka Y."/>
            <person name="Kushiro T."/>
        </authorList>
    </citation>
    <scope>FUNCTION</scope>
    <scope>CATALYTIC ACTIVITY</scope>
</reference>
<reference key="6">
    <citation type="journal article" date="2011" name="J. Antibiot.">
        <title>Characterization of two cytochrome P450 monooxygenase genes of the pyripyropene biosynthetic gene cluster from Penicillium coprobium.</title>
        <authorList>
            <person name="Hu J."/>
            <person name="Okawa H."/>
            <person name="Yamamoto K."/>
            <person name="Oyama K."/>
            <person name="Mitomi M."/>
            <person name="Anzai H."/>
        </authorList>
    </citation>
    <scope>FUNCTION</scope>
</reference>
<reference key="7">
    <citation type="journal article" date="2014" name="Biotechnol. Biotechnol. Equip.">
        <title>Characterization of two acetyltransferase genes in the pyripyropene biosynthetic gene cluster from Penicillium coprobium.</title>
        <authorList>
            <person name="Hu J."/>
            <person name="Furutani A."/>
            <person name="Yamamoto K."/>
            <person name="Oyama K."/>
            <person name="Mitomi M."/>
            <person name="Anzai H."/>
        </authorList>
    </citation>
    <scope>FUNCTION</scope>
</reference>
<gene>
    <name evidence="5" type="primary">pyr7</name>
    <name type="ORF">AFUA_6G13990</name>
</gene>
<proteinExistence type="evidence at protein level"/>